<dbReference type="EC" id="2.7.1.48" evidence="1"/>
<dbReference type="EMBL" id="CP000507">
    <property type="protein sequence ID" value="ABM00253.1"/>
    <property type="molecule type" value="Genomic_DNA"/>
</dbReference>
<dbReference type="RefSeq" id="WP_011760160.1">
    <property type="nucleotide sequence ID" value="NC_008700.1"/>
</dbReference>
<dbReference type="SMR" id="A1S796"/>
<dbReference type="STRING" id="326297.Sama_2047"/>
<dbReference type="KEGG" id="saz:Sama_2047"/>
<dbReference type="eggNOG" id="COG0572">
    <property type="taxonomic scope" value="Bacteria"/>
</dbReference>
<dbReference type="HOGENOM" id="CLU_021278_1_2_6"/>
<dbReference type="OrthoDB" id="9777642at2"/>
<dbReference type="UniPathway" id="UPA00574">
    <property type="reaction ID" value="UER00637"/>
</dbReference>
<dbReference type="UniPathway" id="UPA00579">
    <property type="reaction ID" value="UER00640"/>
</dbReference>
<dbReference type="Proteomes" id="UP000009175">
    <property type="component" value="Chromosome"/>
</dbReference>
<dbReference type="GO" id="GO:0005737">
    <property type="term" value="C:cytoplasm"/>
    <property type="evidence" value="ECO:0007669"/>
    <property type="project" value="UniProtKB-SubCell"/>
</dbReference>
<dbReference type="GO" id="GO:0005524">
    <property type="term" value="F:ATP binding"/>
    <property type="evidence" value="ECO:0007669"/>
    <property type="project" value="UniProtKB-UniRule"/>
</dbReference>
<dbReference type="GO" id="GO:0043771">
    <property type="term" value="F:cytidine kinase activity"/>
    <property type="evidence" value="ECO:0007669"/>
    <property type="project" value="RHEA"/>
</dbReference>
<dbReference type="GO" id="GO:0004849">
    <property type="term" value="F:uridine kinase activity"/>
    <property type="evidence" value="ECO:0007669"/>
    <property type="project" value="UniProtKB-UniRule"/>
</dbReference>
<dbReference type="GO" id="GO:0044211">
    <property type="term" value="P:CTP salvage"/>
    <property type="evidence" value="ECO:0007669"/>
    <property type="project" value="UniProtKB-UniRule"/>
</dbReference>
<dbReference type="GO" id="GO:0044206">
    <property type="term" value="P:UMP salvage"/>
    <property type="evidence" value="ECO:0007669"/>
    <property type="project" value="UniProtKB-UniRule"/>
</dbReference>
<dbReference type="CDD" id="cd02023">
    <property type="entry name" value="UMPK"/>
    <property type="match status" value="1"/>
</dbReference>
<dbReference type="Gene3D" id="3.40.50.300">
    <property type="entry name" value="P-loop containing nucleotide triphosphate hydrolases"/>
    <property type="match status" value="1"/>
</dbReference>
<dbReference type="HAMAP" id="MF_00551">
    <property type="entry name" value="Uridine_kinase"/>
    <property type="match status" value="1"/>
</dbReference>
<dbReference type="InterPro" id="IPR027417">
    <property type="entry name" value="P-loop_NTPase"/>
</dbReference>
<dbReference type="InterPro" id="IPR006083">
    <property type="entry name" value="PRK/URK"/>
</dbReference>
<dbReference type="InterPro" id="IPR026008">
    <property type="entry name" value="Uridine_kinase"/>
</dbReference>
<dbReference type="InterPro" id="IPR000764">
    <property type="entry name" value="Uridine_kinase-like"/>
</dbReference>
<dbReference type="NCBIfam" id="NF004018">
    <property type="entry name" value="PRK05480.1"/>
    <property type="match status" value="1"/>
</dbReference>
<dbReference type="NCBIfam" id="TIGR00235">
    <property type="entry name" value="udk"/>
    <property type="match status" value="1"/>
</dbReference>
<dbReference type="PANTHER" id="PTHR10285">
    <property type="entry name" value="URIDINE KINASE"/>
    <property type="match status" value="1"/>
</dbReference>
<dbReference type="Pfam" id="PF00485">
    <property type="entry name" value="PRK"/>
    <property type="match status" value="1"/>
</dbReference>
<dbReference type="PRINTS" id="PR00988">
    <property type="entry name" value="URIDINKINASE"/>
</dbReference>
<dbReference type="SUPFAM" id="SSF52540">
    <property type="entry name" value="P-loop containing nucleoside triphosphate hydrolases"/>
    <property type="match status" value="1"/>
</dbReference>
<feature type="chain" id="PRO_1000017890" description="Uridine kinase">
    <location>
        <begin position="1"/>
        <end position="212"/>
    </location>
</feature>
<feature type="binding site" evidence="1">
    <location>
        <begin position="13"/>
        <end position="20"/>
    </location>
    <ligand>
        <name>ATP</name>
        <dbReference type="ChEBI" id="CHEBI:30616"/>
    </ligand>
</feature>
<protein>
    <recommendedName>
        <fullName evidence="1">Uridine kinase</fullName>
        <ecNumber evidence="1">2.7.1.48</ecNumber>
    </recommendedName>
    <alternativeName>
        <fullName evidence="1">Cytidine monophosphokinase</fullName>
    </alternativeName>
    <alternativeName>
        <fullName evidence="1">Uridine monophosphokinase</fullName>
    </alternativeName>
</protein>
<reference key="1">
    <citation type="submission" date="2006-12" db="EMBL/GenBank/DDBJ databases">
        <title>Complete sequence of Shewanella amazonensis SB2B.</title>
        <authorList>
            <consortium name="US DOE Joint Genome Institute"/>
            <person name="Copeland A."/>
            <person name="Lucas S."/>
            <person name="Lapidus A."/>
            <person name="Barry K."/>
            <person name="Detter J.C."/>
            <person name="Glavina del Rio T."/>
            <person name="Hammon N."/>
            <person name="Israni S."/>
            <person name="Dalin E."/>
            <person name="Tice H."/>
            <person name="Pitluck S."/>
            <person name="Munk A.C."/>
            <person name="Brettin T."/>
            <person name="Bruce D."/>
            <person name="Han C."/>
            <person name="Tapia R."/>
            <person name="Gilna P."/>
            <person name="Schmutz J."/>
            <person name="Larimer F."/>
            <person name="Land M."/>
            <person name="Hauser L."/>
            <person name="Kyrpides N."/>
            <person name="Mikhailova N."/>
            <person name="Fredrickson J."/>
            <person name="Richardson P."/>
        </authorList>
    </citation>
    <scope>NUCLEOTIDE SEQUENCE [LARGE SCALE GENOMIC DNA]</scope>
    <source>
        <strain>ATCC BAA-1098 / SB2B</strain>
    </source>
</reference>
<sequence length="212" mass="24137">MNSQQCVIIGIAGASASGKSLIAKTIYEELCRDLGTDQIGVIAEDAYYRDQSHLSMEERVKTNYDHPKAMDHELLAQHLRSLKEGDSVEIPVYSYTEHTRMSDTRTMTPKKVIILEGILLLTDPHLRDLMDASVFMDTPLDICFLRRLTRDVAERGRTMESVISQYQKTVRPMFLQFIEPSKQYADIIVPRGGKNRIATDILKARIQHLLAK</sequence>
<comment type="catalytic activity">
    <reaction evidence="1">
        <text>uridine + ATP = UMP + ADP + H(+)</text>
        <dbReference type="Rhea" id="RHEA:16825"/>
        <dbReference type="ChEBI" id="CHEBI:15378"/>
        <dbReference type="ChEBI" id="CHEBI:16704"/>
        <dbReference type="ChEBI" id="CHEBI:30616"/>
        <dbReference type="ChEBI" id="CHEBI:57865"/>
        <dbReference type="ChEBI" id="CHEBI:456216"/>
        <dbReference type="EC" id="2.7.1.48"/>
    </reaction>
</comment>
<comment type="catalytic activity">
    <reaction evidence="1">
        <text>cytidine + ATP = CMP + ADP + H(+)</text>
        <dbReference type="Rhea" id="RHEA:24674"/>
        <dbReference type="ChEBI" id="CHEBI:15378"/>
        <dbReference type="ChEBI" id="CHEBI:17562"/>
        <dbReference type="ChEBI" id="CHEBI:30616"/>
        <dbReference type="ChEBI" id="CHEBI:60377"/>
        <dbReference type="ChEBI" id="CHEBI:456216"/>
        <dbReference type="EC" id="2.7.1.48"/>
    </reaction>
</comment>
<comment type="pathway">
    <text evidence="1">Pyrimidine metabolism; CTP biosynthesis via salvage pathway; CTP from cytidine: step 1/3.</text>
</comment>
<comment type="pathway">
    <text evidence="1">Pyrimidine metabolism; UMP biosynthesis via salvage pathway; UMP from uridine: step 1/1.</text>
</comment>
<comment type="subcellular location">
    <subcellularLocation>
        <location evidence="1">Cytoplasm</location>
    </subcellularLocation>
</comment>
<comment type="similarity">
    <text evidence="1">Belongs to the uridine kinase family.</text>
</comment>
<accession>A1S796</accession>
<name>URK_SHEAM</name>
<organism>
    <name type="scientific">Shewanella amazonensis (strain ATCC BAA-1098 / SB2B)</name>
    <dbReference type="NCBI Taxonomy" id="326297"/>
    <lineage>
        <taxon>Bacteria</taxon>
        <taxon>Pseudomonadati</taxon>
        <taxon>Pseudomonadota</taxon>
        <taxon>Gammaproteobacteria</taxon>
        <taxon>Alteromonadales</taxon>
        <taxon>Shewanellaceae</taxon>
        <taxon>Shewanella</taxon>
    </lineage>
</organism>
<evidence type="ECO:0000255" key="1">
    <source>
        <dbReference type="HAMAP-Rule" id="MF_00551"/>
    </source>
</evidence>
<keyword id="KW-0067">ATP-binding</keyword>
<keyword id="KW-0963">Cytoplasm</keyword>
<keyword id="KW-0418">Kinase</keyword>
<keyword id="KW-0547">Nucleotide-binding</keyword>
<keyword id="KW-1185">Reference proteome</keyword>
<keyword id="KW-0808">Transferase</keyword>
<gene>
    <name evidence="1" type="primary">udk</name>
    <name type="ordered locus">Sama_2047</name>
</gene>
<proteinExistence type="inferred from homology"/>